<gene>
    <name type="primary">cyp11</name>
    <name type="ORF">RO3G_13323</name>
</gene>
<dbReference type="EC" id="5.2.1.8"/>
<dbReference type="EMBL" id="CH476743">
    <property type="protein sequence ID" value="EIE88612.1"/>
    <property type="status" value="ALT_SEQ"/>
    <property type="molecule type" value="Genomic_DNA"/>
</dbReference>
<dbReference type="SMR" id="P0C1I9"/>
<dbReference type="STRING" id="246409.P0C1I9"/>
<dbReference type="eggNOG" id="KOG0546">
    <property type="taxonomic scope" value="Eukaryota"/>
</dbReference>
<dbReference type="InParanoid" id="P0C1I9"/>
<dbReference type="OrthoDB" id="43417at4827"/>
<dbReference type="Proteomes" id="UP000009138">
    <property type="component" value="Unassembled WGS sequence"/>
</dbReference>
<dbReference type="GO" id="GO:0005737">
    <property type="term" value="C:cytoplasm"/>
    <property type="evidence" value="ECO:0007669"/>
    <property type="project" value="TreeGrafter"/>
</dbReference>
<dbReference type="GO" id="GO:0016018">
    <property type="term" value="F:cyclosporin A binding"/>
    <property type="evidence" value="ECO:0007669"/>
    <property type="project" value="TreeGrafter"/>
</dbReference>
<dbReference type="GO" id="GO:0003755">
    <property type="term" value="F:peptidyl-prolyl cis-trans isomerase activity"/>
    <property type="evidence" value="ECO:0007669"/>
    <property type="project" value="UniProtKB-KW"/>
</dbReference>
<dbReference type="GO" id="GO:0006457">
    <property type="term" value="P:protein folding"/>
    <property type="evidence" value="ECO:0007669"/>
    <property type="project" value="InterPro"/>
</dbReference>
<dbReference type="CDD" id="cd01926">
    <property type="entry name" value="cyclophilin_ABH_like"/>
    <property type="match status" value="1"/>
</dbReference>
<dbReference type="FunFam" id="2.40.100.10:FF:000022">
    <property type="entry name" value="Peptidyl-prolyl cis-trans isomerase CYP95"/>
    <property type="match status" value="1"/>
</dbReference>
<dbReference type="Gene3D" id="2.40.100.10">
    <property type="entry name" value="Cyclophilin-like"/>
    <property type="match status" value="1"/>
</dbReference>
<dbReference type="InterPro" id="IPR029000">
    <property type="entry name" value="Cyclophilin-like_dom_sf"/>
</dbReference>
<dbReference type="InterPro" id="IPR020892">
    <property type="entry name" value="Cyclophilin-type_PPIase_CS"/>
</dbReference>
<dbReference type="InterPro" id="IPR002130">
    <property type="entry name" value="Cyclophilin-type_PPIase_dom"/>
</dbReference>
<dbReference type="PANTHER" id="PTHR11071">
    <property type="entry name" value="PEPTIDYL-PROLYL CIS-TRANS ISOMERASE"/>
    <property type="match status" value="1"/>
</dbReference>
<dbReference type="PANTHER" id="PTHR11071:SF561">
    <property type="entry name" value="PEPTIDYL-PROLYL CIS-TRANS ISOMERASE D-RELATED"/>
    <property type="match status" value="1"/>
</dbReference>
<dbReference type="Pfam" id="PF00160">
    <property type="entry name" value="Pro_isomerase"/>
    <property type="match status" value="1"/>
</dbReference>
<dbReference type="PRINTS" id="PR00153">
    <property type="entry name" value="CSAPPISMRASE"/>
</dbReference>
<dbReference type="SUPFAM" id="SSF50891">
    <property type="entry name" value="Cyclophilin-like"/>
    <property type="match status" value="1"/>
</dbReference>
<dbReference type="PROSITE" id="PS00170">
    <property type="entry name" value="CSA_PPIASE_1"/>
    <property type="match status" value="1"/>
</dbReference>
<dbReference type="PROSITE" id="PS50072">
    <property type="entry name" value="CSA_PPIASE_2"/>
    <property type="match status" value="1"/>
</dbReference>
<feature type="chain" id="PRO_0000244722" description="Peptidyl-prolyl cis-trans isomerase cyp11">
    <location>
        <begin position="1"/>
        <end position="338"/>
    </location>
</feature>
<feature type="domain" description="PPIase cyclophilin-type" evidence="2">
    <location>
        <begin position="7"/>
        <end position="172"/>
    </location>
</feature>
<feature type="region of interest" description="Disordered" evidence="3">
    <location>
        <begin position="186"/>
        <end position="338"/>
    </location>
</feature>
<feature type="compositionally biased region" description="Acidic residues" evidence="3">
    <location>
        <begin position="208"/>
        <end position="218"/>
    </location>
</feature>
<feature type="compositionally biased region" description="Basic residues" evidence="3">
    <location>
        <begin position="223"/>
        <end position="242"/>
    </location>
</feature>
<feature type="compositionally biased region" description="Basic and acidic residues" evidence="3">
    <location>
        <begin position="243"/>
        <end position="309"/>
    </location>
</feature>
<feature type="compositionally biased region" description="Basic residues" evidence="3">
    <location>
        <begin position="329"/>
        <end position="338"/>
    </location>
</feature>
<keyword id="KW-0413">Isomerase</keyword>
<keyword id="KW-1185">Reference proteome</keyword>
<keyword id="KW-0697">Rotamase</keyword>
<reference key="1">
    <citation type="journal article" date="2009" name="PLoS Genet.">
        <title>Genomic analysis of the basal lineage fungus Rhizopus oryzae reveals a whole-genome duplication.</title>
        <authorList>
            <person name="Ma L.-J."/>
            <person name="Ibrahim A.S."/>
            <person name="Skory C."/>
            <person name="Grabherr M.G."/>
            <person name="Burger G."/>
            <person name="Butler M."/>
            <person name="Elias M."/>
            <person name="Idnurm A."/>
            <person name="Lang B.F."/>
            <person name="Sone T."/>
            <person name="Abe A."/>
            <person name="Calvo S.E."/>
            <person name="Corrochano L.M."/>
            <person name="Engels R."/>
            <person name="Fu J."/>
            <person name="Hansberg W."/>
            <person name="Kim J.-M."/>
            <person name="Kodira C.D."/>
            <person name="Koehrsen M.J."/>
            <person name="Liu B."/>
            <person name="Miranda-Saavedra D."/>
            <person name="O'Leary S."/>
            <person name="Ortiz-Castellanos L."/>
            <person name="Poulter R."/>
            <person name="Rodriguez-Romero J."/>
            <person name="Ruiz-Herrera J."/>
            <person name="Shen Y.-Q."/>
            <person name="Zeng Q."/>
            <person name="Galagan J."/>
            <person name="Birren B.W."/>
            <person name="Cuomo C.A."/>
            <person name="Wickes B.L."/>
        </authorList>
    </citation>
    <scope>NUCLEOTIDE SEQUENCE [LARGE SCALE GENOMIC DNA]</scope>
    <source>
        <strain>RA 99-880 / ATCC MYA-4621 / FGSC 9543 / NRRL 43880</strain>
    </source>
</reference>
<reference key="2">
    <citation type="journal article" date="2006" name="BMC Genomics">
        <title>Identification and comparative analysis of sixteen fungal peptidyl-prolyl cis/trans isomerase repertoires.</title>
        <authorList>
            <person name="Pemberton T.J."/>
        </authorList>
    </citation>
    <scope>REVISION OF GENE MODEL</scope>
</reference>
<evidence type="ECO:0000250" key="1"/>
<evidence type="ECO:0000255" key="2">
    <source>
        <dbReference type="PROSITE-ProRule" id="PRU00156"/>
    </source>
</evidence>
<evidence type="ECO:0000256" key="3">
    <source>
        <dbReference type="SAM" id="MobiDB-lite"/>
    </source>
</evidence>
<evidence type="ECO:0000305" key="4"/>
<accession>P0C1I9</accession>
<accession>I1CJI2</accession>
<name>CYP11_RHIO9</name>
<proteinExistence type="inferred from homology"/>
<protein>
    <recommendedName>
        <fullName>Peptidyl-prolyl cis-trans isomerase cyp11</fullName>
        <shortName>PPIase cyp11</shortName>
        <ecNumber>5.2.1.8</ecNumber>
    </recommendedName>
    <alternativeName>
        <fullName>Cyclophilin cyp11</fullName>
    </alternativeName>
    <alternativeName>
        <fullName>Rotamase cyp11</fullName>
    </alternativeName>
</protein>
<sequence>MINPRVFFDIDVDGNRIGRIVIELFADQVPKTAENFRALCTGEKGIGKVSNMPLHYKGSIFHRIIKGFMCQGGDFTHRTGKGGESIYGANFPDESFSRKHDTHGLLSMANRGPNTQTSQFFITTRPTPHLDGKHVVFGRVVSGYNVVEMMENEPVDDQDRPLHNVMIANCGELVLKLPPGALLKKASAVSDESEDEIKNRKRSRSSDDDSSSDEDSEEEERKRTKKKRSRKHSKKDKKKKKRESSNRKRSPEANRHVSRERRDISREKRDNSRERRLSRKEDDRRSPSDKRKEDRRSLSPEKRSSERRVARPVRPRLNYNDPNVEVKGRGRFKYRPTY</sequence>
<comment type="function">
    <text evidence="1">PPIases accelerate the folding of proteins. It catalyzes the cis-trans isomerization of proline imidic peptide bonds in oligopeptides (By similarity).</text>
</comment>
<comment type="catalytic activity">
    <reaction>
        <text>[protein]-peptidylproline (omega=180) = [protein]-peptidylproline (omega=0)</text>
        <dbReference type="Rhea" id="RHEA:16237"/>
        <dbReference type="Rhea" id="RHEA-COMP:10747"/>
        <dbReference type="Rhea" id="RHEA-COMP:10748"/>
        <dbReference type="ChEBI" id="CHEBI:83833"/>
        <dbReference type="ChEBI" id="CHEBI:83834"/>
        <dbReference type="EC" id="5.2.1.8"/>
    </reaction>
</comment>
<comment type="similarity">
    <text evidence="4">Belongs to the cyclophilin-type PPIase family.</text>
</comment>
<comment type="sequence caution" evidence="4">
    <conflict type="erroneous gene model prediction">
        <sequence resource="EMBL-CDS" id="EIE88612"/>
    </conflict>
</comment>
<organism>
    <name type="scientific">Rhizopus delemar (strain RA 99-880 / ATCC MYA-4621 / FGSC 9543 / NRRL 43880)</name>
    <name type="common">Mucormycosis agent</name>
    <name type="synonym">Rhizopus arrhizus var. delemar</name>
    <dbReference type="NCBI Taxonomy" id="246409"/>
    <lineage>
        <taxon>Eukaryota</taxon>
        <taxon>Fungi</taxon>
        <taxon>Fungi incertae sedis</taxon>
        <taxon>Mucoromycota</taxon>
        <taxon>Mucoromycotina</taxon>
        <taxon>Mucoromycetes</taxon>
        <taxon>Mucorales</taxon>
        <taxon>Mucorineae</taxon>
        <taxon>Rhizopodaceae</taxon>
        <taxon>Rhizopus</taxon>
    </lineage>
</organism>